<proteinExistence type="inferred from homology"/>
<sequence length="175" mass="20049">MVRLRETEVILRLCIVFFILLSSCLIGLDSQTKEIAYIHKKVSFRYLLALEAELYINVVVAAYNLVQIGLGWYNVEQKTSNPKWFSYLLDQTAAYVVFAGTSAAAQHSLLVVTGSRELQWMKWCYKFTRFCFQMGSAIILNYIAAALMVLLSSISAFNLFRLYSPKRFFSFKSSS</sequence>
<reference key="1">
    <citation type="journal article" date="2011" name="Nat. Genet.">
        <title>The Arabidopsis lyrata genome sequence and the basis of rapid genome size change.</title>
        <authorList>
            <person name="Hu T.T."/>
            <person name="Pattyn P."/>
            <person name="Bakker E.G."/>
            <person name="Cao J."/>
            <person name="Cheng J.-F."/>
            <person name="Clark R.M."/>
            <person name="Fahlgren N."/>
            <person name="Fawcett J.A."/>
            <person name="Grimwood J."/>
            <person name="Gundlach H."/>
            <person name="Haberer G."/>
            <person name="Hollister J.D."/>
            <person name="Ossowski S."/>
            <person name="Ottilar R.P."/>
            <person name="Salamov A.A."/>
            <person name="Schneeberger K."/>
            <person name="Spannagl M."/>
            <person name="Wang X."/>
            <person name="Yang L."/>
            <person name="Nasrallah M.E."/>
            <person name="Bergelson J."/>
            <person name="Carrington J.C."/>
            <person name="Gaut B.S."/>
            <person name="Schmutz J."/>
            <person name="Mayer K.F.X."/>
            <person name="Van de Peer Y."/>
            <person name="Grigoriev I.V."/>
            <person name="Nordborg M."/>
            <person name="Weigel D."/>
            <person name="Guo Y.-L."/>
        </authorList>
    </citation>
    <scope>NUCLEOTIDE SEQUENCE [LARGE SCALE GENOMIC DNA]</scope>
    <source>
        <strain>cv. MN47</strain>
    </source>
</reference>
<reference key="2">
    <citation type="journal article" date="2014" name="Plant Physiol.">
        <title>Functional and evolutionary analysis of the CASPARIAN STRIP MEMBRANE DOMAIN PROTEIN family.</title>
        <authorList>
            <person name="Roppolo D."/>
            <person name="Boeckmann B."/>
            <person name="Pfister A."/>
            <person name="Boutet E."/>
            <person name="Rubio M.C."/>
            <person name="Denervaud-Tendon V."/>
            <person name="Vermeer J.E."/>
            <person name="Gheyselinck J."/>
            <person name="Xenarios I."/>
            <person name="Geldner N."/>
        </authorList>
    </citation>
    <scope>GENE FAMILY</scope>
    <scope>NOMENCLATURE</scope>
</reference>
<keyword id="KW-1003">Cell membrane</keyword>
<keyword id="KW-0472">Membrane</keyword>
<keyword id="KW-1185">Reference proteome</keyword>
<keyword id="KW-0812">Transmembrane</keyword>
<keyword id="KW-1133">Transmembrane helix</keyword>
<protein>
    <recommendedName>
        <fullName>CASP-like protein 2C1</fullName>
        <shortName>AlCASPL2C1</shortName>
    </recommendedName>
</protein>
<evidence type="ECO:0000250" key="1"/>
<evidence type="ECO:0000255" key="2"/>
<evidence type="ECO:0000305" key="3"/>
<feature type="chain" id="PRO_0000412003" description="CASP-like protein 2C1">
    <location>
        <begin position="1"/>
        <end position="175"/>
    </location>
</feature>
<feature type="topological domain" description="Cytoplasmic" evidence="2">
    <location>
        <begin position="1"/>
        <end position="7"/>
    </location>
</feature>
<feature type="transmembrane region" description="Helical" evidence="2">
    <location>
        <begin position="8"/>
        <end position="28"/>
    </location>
</feature>
<feature type="topological domain" description="Extracellular" evidence="2">
    <location>
        <begin position="29"/>
        <end position="51"/>
    </location>
</feature>
<feature type="transmembrane region" description="Helical" evidence="2">
    <location>
        <begin position="52"/>
        <end position="72"/>
    </location>
</feature>
<feature type="topological domain" description="Cytoplasmic" evidence="2">
    <location>
        <begin position="73"/>
        <end position="91"/>
    </location>
</feature>
<feature type="transmembrane region" description="Helical" evidence="2">
    <location>
        <begin position="92"/>
        <end position="112"/>
    </location>
</feature>
<feature type="topological domain" description="Extracellular" evidence="2">
    <location>
        <begin position="113"/>
        <end position="136"/>
    </location>
</feature>
<feature type="transmembrane region" description="Helical" evidence="2">
    <location>
        <begin position="137"/>
        <end position="157"/>
    </location>
</feature>
<feature type="topological domain" description="Cytoplasmic" evidence="2">
    <location>
        <begin position="158"/>
        <end position="175"/>
    </location>
</feature>
<name>CSPL4_ARALL</name>
<dbReference type="EMBL" id="GL348719">
    <property type="protein sequence ID" value="EFH45910.1"/>
    <property type="molecule type" value="Genomic_DNA"/>
</dbReference>
<dbReference type="SMR" id="D7MFW5"/>
<dbReference type="STRING" id="81972.D7MFW5"/>
<dbReference type="EnsemblPlants" id="Al_scaffold_0007_1558">
    <property type="protein sequence ID" value="Al_scaffold_0007_1558"/>
    <property type="gene ID" value="Al_scaffold_0007_1558"/>
</dbReference>
<dbReference type="Gramene" id="Al_scaffold_0007_1558">
    <property type="protein sequence ID" value="Al_scaffold_0007_1558"/>
    <property type="gene ID" value="Al_scaffold_0007_1558"/>
</dbReference>
<dbReference type="KEGG" id="aly:9305722"/>
<dbReference type="eggNOG" id="KOG0743">
    <property type="taxonomic scope" value="Eukaryota"/>
</dbReference>
<dbReference type="HOGENOM" id="CLU_066104_0_1_1"/>
<dbReference type="OrthoDB" id="689315at2759"/>
<dbReference type="Proteomes" id="UP000008694">
    <property type="component" value="Unassembled WGS sequence"/>
</dbReference>
<dbReference type="GO" id="GO:0005886">
    <property type="term" value="C:plasma membrane"/>
    <property type="evidence" value="ECO:0007669"/>
    <property type="project" value="UniProtKB-SubCell"/>
</dbReference>
<dbReference type="InterPro" id="IPR006459">
    <property type="entry name" value="CASP/CASPL"/>
</dbReference>
<dbReference type="InterPro" id="IPR006702">
    <property type="entry name" value="CASP_dom"/>
</dbReference>
<dbReference type="NCBIfam" id="TIGR01569">
    <property type="entry name" value="A_tha_TIGR01569"/>
    <property type="match status" value="1"/>
</dbReference>
<dbReference type="PANTHER" id="PTHR33573:SF30">
    <property type="entry name" value="CASP-LIKE PROTEIN 2C1-RELATED"/>
    <property type="match status" value="1"/>
</dbReference>
<dbReference type="PANTHER" id="PTHR33573">
    <property type="entry name" value="CASP-LIKE PROTEIN 4A4"/>
    <property type="match status" value="1"/>
</dbReference>
<dbReference type="Pfam" id="PF04535">
    <property type="entry name" value="CASP_dom"/>
    <property type="match status" value="1"/>
</dbReference>
<accession>D7MFW5</accession>
<gene>
    <name type="ORF">ARALYDRAFT_657503</name>
</gene>
<organism>
    <name type="scientific">Arabidopsis lyrata subsp. lyrata</name>
    <name type="common">Lyre-leaved rock-cress</name>
    <dbReference type="NCBI Taxonomy" id="81972"/>
    <lineage>
        <taxon>Eukaryota</taxon>
        <taxon>Viridiplantae</taxon>
        <taxon>Streptophyta</taxon>
        <taxon>Embryophyta</taxon>
        <taxon>Tracheophyta</taxon>
        <taxon>Spermatophyta</taxon>
        <taxon>Magnoliopsida</taxon>
        <taxon>eudicotyledons</taxon>
        <taxon>Gunneridae</taxon>
        <taxon>Pentapetalae</taxon>
        <taxon>rosids</taxon>
        <taxon>malvids</taxon>
        <taxon>Brassicales</taxon>
        <taxon>Brassicaceae</taxon>
        <taxon>Camelineae</taxon>
        <taxon>Arabidopsis</taxon>
    </lineage>
</organism>
<comment type="subunit">
    <text evidence="1">Homodimer and heterodimers.</text>
</comment>
<comment type="subcellular location">
    <subcellularLocation>
        <location evidence="1">Cell membrane</location>
        <topology evidence="1">Multi-pass membrane protein</topology>
    </subcellularLocation>
</comment>
<comment type="similarity">
    <text evidence="3">Belongs to the Casparian strip membrane proteins (CASP) family.</text>
</comment>